<gene>
    <name evidence="4" type="primary">IRKI</name>
    <name evidence="5" type="ordered locus">At5g12900</name>
    <name evidence="6" type="ORF">T24H18.70</name>
</gene>
<protein>
    <recommendedName>
        <fullName evidence="4">IRK-interacting protein</fullName>
    </recommendedName>
</protein>
<accession>Q9LXU9</accession>
<comment type="subunit">
    <text evidence="3">Interacts with IRK.</text>
</comment>
<comment type="interaction">
    <interactant intactId="EBI-1392508">
        <id>Q9LXU9</id>
    </interactant>
    <interactant intactId="EBI-1392485">
        <id>Q9LY03</id>
        <label>IRK</label>
    </interactant>
    <organismsDiffer>false</organismsDiffer>
    <experiments>2</experiments>
</comment>
<comment type="tissue specificity">
    <text evidence="3">Highly expressed in root tips, shoot apices and developing flowers.</text>
</comment>
<comment type="induction">
    <text evidence="3">By auxin.</text>
</comment>
<comment type="disruption phenotype">
    <text evidence="3">No visible phenotype under normal growth conditions.</text>
</comment>
<keyword id="KW-0175">Coiled coil</keyword>
<keyword id="KW-1185">Reference proteome</keyword>
<reference key="1">
    <citation type="journal article" date="2004" name="Biosci. Biotechnol. Biochem.">
        <title>Molecular characterization of the cytoplasmic interacting protein of the receptor kinase IRK expressed in the inflorescence and root apices of Arabidopsis.</title>
        <authorList>
            <person name="Hattan J."/>
            <person name="Kanamoto H."/>
            <person name="Takemura M."/>
            <person name="Yokota A."/>
            <person name="Kohchi T."/>
        </authorList>
    </citation>
    <scope>NUCLEOTIDE SEQUENCE [MRNA]</scope>
    <scope>INTERACTION WITH IRK</scope>
    <scope>TISSUE SPECIFICITY</scope>
    <scope>INDUCTION BY AUXIN</scope>
    <scope>DISRUPTION PHENOTYPE</scope>
    <source>
        <strain>cv. Columbia</strain>
    </source>
</reference>
<reference key="2">
    <citation type="journal article" date="2000" name="Nature">
        <title>Sequence and analysis of chromosome 5 of the plant Arabidopsis thaliana.</title>
        <authorList>
            <person name="Tabata S."/>
            <person name="Kaneko T."/>
            <person name="Nakamura Y."/>
            <person name="Kotani H."/>
            <person name="Kato T."/>
            <person name="Asamizu E."/>
            <person name="Miyajima N."/>
            <person name="Sasamoto S."/>
            <person name="Kimura T."/>
            <person name="Hosouchi T."/>
            <person name="Kawashima K."/>
            <person name="Kohara M."/>
            <person name="Matsumoto M."/>
            <person name="Matsuno A."/>
            <person name="Muraki A."/>
            <person name="Nakayama S."/>
            <person name="Nakazaki N."/>
            <person name="Naruo K."/>
            <person name="Okumura S."/>
            <person name="Shinpo S."/>
            <person name="Takeuchi C."/>
            <person name="Wada T."/>
            <person name="Watanabe A."/>
            <person name="Yamada M."/>
            <person name="Yasuda M."/>
            <person name="Sato S."/>
            <person name="de la Bastide M."/>
            <person name="Huang E."/>
            <person name="Spiegel L."/>
            <person name="Gnoj L."/>
            <person name="O'Shaughnessy A."/>
            <person name="Preston R."/>
            <person name="Habermann K."/>
            <person name="Murray J."/>
            <person name="Johnson D."/>
            <person name="Rohlfing T."/>
            <person name="Nelson J."/>
            <person name="Stoneking T."/>
            <person name="Pepin K."/>
            <person name="Spieth J."/>
            <person name="Sekhon M."/>
            <person name="Armstrong J."/>
            <person name="Becker M."/>
            <person name="Belter E."/>
            <person name="Cordum H."/>
            <person name="Cordes M."/>
            <person name="Courtney L."/>
            <person name="Courtney W."/>
            <person name="Dante M."/>
            <person name="Du H."/>
            <person name="Edwards J."/>
            <person name="Fryman J."/>
            <person name="Haakensen B."/>
            <person name="Lamar E."/>
            <person name="Latreille P."/>
            <person name="Leonard S."/>
            <person name="Meyer R."/>
            <person name="Mulvaney E."/>
            <person name="Ozersky P."/>
            <person name="Riley A."/>
            <person name="Strowmatt C."/>
            <person name="Wagner-McPherson C."/>
            <person name="Wollam A."/>
            <person name="Yoakum M."/>
            <person name="Bell M."/>
            <person name="Dedhia N."/>
            <person name="Parnell L."/>
            <person name="Shah R."/>
            <person name="Rodriguez M."/>
            <person name="Hoon See L."/>
            <person name="Vil D."/>
            <person name="Baker J."/>
            <person name="Kirchoff K."/>
            <person name="Toth K."/>
            <person name="King L."/>
            <person name="Bahret A."/>
            <person name="Miller B."/>
            <person name="Marra M.A."/>
            <person name="Martienssen R."/>
            <person name="McCombie W.R."/>
            <person name="Wilson R.K."/>
            <person name="Murphy G."/>
            <person name="Bancroft I."/>
            <person name="Volckaert G."/>
            <person name="Wambutt R."/>
            <person name="Duesterhoeft A."/>
            <person name="Stiekema W."/>
            <person name="Pohl T."/>
            <person name="Entian K.-D."/>
            <person name="Terryn N."/>
            <person name="Hartley N."/>
            <person name="Bent E."/>
            <person name="Johnson S."/>
            <person name="Langham S.-A."/>
            <person name="McCullagh B."/>
            <person name="Robben J."/>
            <person name="Grymonprez B."/>
            <person name="Zimmermann W."/>
            <person name="Ramsperger U."/>
            <person name="Wedler H."/>
            <person name="Balke K."/>
            <person name="Wedler E."/>
            <person name="Peters S."/>
            <person name="van Staveren M."/>
            <person name="Dirkse W."/>
            <person name="Mooijman P."/>
            <person name="Klein Lankhorst R."/>
            <person name="Weitzenegger T."/>
            <person name="Bothe G."/>
            <person name="Rose M."/>
            <person name="Hauf J."/>
            <person name="Berneiser S."/>
            <person name="Hempel S."/>
            <person name="Feldpausch M."/>
            <person name="Lamberth S."/>
            <person name="Villarroel R."/>
            <person name="Gielen J."/>
            <person name="Ardiles W."/>
            <person name="Bents O."/>
            <person name="Lemcke K."/>
            <person name="Kolesov G."/>
            <person name="Mayer K.F.X."/>
            <person name="Rudd S."/>
            <person name="Schoof H."/>
            <person name="Schueller C."/>
            <person name="Zaccaria P."/>
            <person name="Mewes H.-W."/>
            <person name="Bevan M."/>
            <person name="Fransz P.F."/>
        </authorList>
    </citation>
    <scope>NUCLEOTIDE SEQUENCE [LARGE SCALE GENOMIC DNA]</scope>
    <source>
        <strain>cv. Columbia</strain>
    </source>
</reference>
<reference key="3">
    <citation type="journal article" date="2017" name="Plant J.">
        <title>Araport11: a complete reannotation of the Arabidopsis thaliana reference genome.</title>
        <authorList>
            <person name="Cheng C.Y."/>
            <person name="Krishnakumar V."/>
            <person name="Chan A.P."/>
            <person name="Thibaud-Nissen F."/>
            <person name="Schobel S."/>
            <person name="Town C.D."/>
        </authorList>
    </citation>
    <scope>GENOME REANNOTATION</scope>
    <source>
        <strain>cv. Columbia</strain>
    </source>
</reference>
<reference key="4">
    <citation type="journal article" date="2003" name="Science">
        <title>Empirical analysis of transcriptional activity in the Arabidopsis genome.</title>
        <authorList>
            <person name="Yamada K."/>
            <person name="Lim J."/>
            <person name="Dale J.M."/>
            <person name="Chen H."/>
            <person name="Shinn P."/>
            <person name="Palm C.J."/>
            <person name="Southwick A.M."/>
            <person name="Wu H.C."/>
            <person name="Kim C.J."/>
            <person name="Nguyen M."/>
            <person name="Pham P.K."/>
            <person name="Cheuk R.F."/>
            <person name="Karlin-Newmann G."/>
            <person name="Liu S.X."/>
            <person name="Lam B."/>
            <person name="Sakano H."/>
            <person name="Wu T."/>
            <person name="Yu G."/>
            <person name="Miranda M."/>
            <person name="Quach H.L."/>
            <person name="Tripp M."/>
            <person name="Chang C.H."/>
            <person name="Lee J.M."/>
            <person name="Toriumi M.J."/>
            <person name="Chan M.M."/>
            <person name="Tang C.C."/>
            <person name="Onodera C.S."/>
            <person name="Deng J.M."/>
            <person name="Akiyama K."/>
            <person name="Ansari Y."/>
            <person name="Arakawa T."/>
            <person name="Banh J."/>
            <person name="Banno F."/>
            <person name="Bowser L."/>
            <person name="Brooks S.Y."/>
            <person name="Carninci P."/>
            <person name="Chao Q."/>
            <person name="Choy N."/>
            <person name="Enju A."/>
            <person name="Goldsmith A.D."/>
            <person name="Gurjal M."/>
            <person name="Hansen N.F."/>
            <person name="Hayashizaki Y."/>
            <person name="Johnson-Hopson C."/>
            <person name="Hsuan V.W."/>
            <person name="Iida K."/>
            <person name="Karnes M."/>
            <person name="Khan S."/>
            <person name="Koesema E."/>
            <person name="Ishida J."/>
            <person name="Jiang P.X."/>
            <person name="Jones T."/>
            <person name="Kawai J."/>
            <person name="Kamiya A."/>
            <person name="Meyers C."/>
            <person name="Nakajima M."/>
            <person name="Narusaka M."/>
            <person name="Seki M."/>
            <person name="Sakurai T."/>
            <person name="Satou M."/>
            <person name="Tamse R."/>
            <person name="Vaysberg M."/>
            <person name="Wallender E.K."/>
            <person name="Wong C."/>
            <person name="Yamamura Y."/>
            <person name="Yuan S."/>
            <person name="Shinozaki K."/>
            <person name="Davis R.W."/>
            <person name="Theologis A."/>
            <person name="Ecker J.R."/>
        </authorList>
    </citation>
    <scope>NUCLEOTIDE SEQUENCE [LARGE SCALE MRNA]</scope>
    <source>
        <strain>cv. Columbia</strain>
    </source>
</reference>
<organism>
    <name type="scientific">Arabidopsis thaliana</name>
    <name type="common">Mouse-ear cress</name>
    <dbReference type="NCBI Taxonomy" id="3702"/>
    <lineage>
        <taxon>Eukaryota</taxon>
        <taxon>Viridiplantae</taxon>
        <taxon>Streptophyta</taxon>
        <taxon>Embryophyta</taxon>
        <taxon>Tracheophyta</taxon>
        <taxon>Spermatophyta</taxon>
        <taxon>Magnoliopsida</taxon>
        <taxon>eudicotyledons</taxon>
        <taxon>Gunneridae</taxon>
        <taxon>Pentapetalae</taxon>
        <taxon>rosids</taxon>
        <taxon>malvids</taxon>
        <taxon>Brassicales</taxon>
        <taxon>Brassicaceae</taxon>
        <taxon>Camelineae</taxon>
        <taxon>Arabidopsis</taxon>
    </lineage>
</organism>
<name>IRKI_ARATH</name>
<proteinExistence type="evidence at protein level"/>
<dbReference type="EMBL" id="AB177845">
    <property type="protein sequence ID" value="BAD21351.1"/>
    <property type="molecule type" value="mRNA"/>
</dbReference>
<dbReference type="EMBL" id="AL353013">
    <property type="protein sequence ID" value="CAB88254.1"/>
    <property type="molecule type" value="Genomic_DNA"/>
</dbReference>
<dbReference type="EMBL" id="CP002688">
    <property type="protein sequence ID" value="AED91827.1"/>
    <property type="molecule type" value="Genomic_DNA"/>
</dbReference>
<dbReference type="EMBL" id="AY140032">
    <property type="protein sequence ID" value="AAM98173.1"/>
    <property type="molecule type" value="mRNA"/>
</dbReference>
<dbReference type="EMBL" id="BT008908">
    <property type="protein sequence ID" value="AAP68347.1"/>
    <property type="molecule type" value="mRNA"/>
</dbReference>
<dbReference type="PIR" id="T49904">
    <property type="entry name" value="T49904"/>
</dbReference>
<dbReference type="RefSeq" id="NP_196794.1">
    <property type="nucleotide sequence ID" value="NM_121293.3"/>
</dbReference>
<dbReference type="SMR" id="Q9LXU9"/>
<dbReference type="FunCoup" id="Q9LXU9">
    <property type="interactions" value="616"/>
</dbReference>
<dbReference type="IntAct" id="Q9LXU9">
    <property type="interactions" value="1"/>
</dbReference>
<dbReference type="iPTMnet" id="Q9LXU9"/>
<dbReference type="PaxDb" id="3702-AT5G12900.1"/>
<dbReference type="ProteomicsDB" id="247294"/>
<dbReference type="EnsemblPlants" id="AT5G12900.1">
    <property type="protein sequence ID" value="AT5G12900.1"/>
    <property type="gene ID" value="AT5G12900"/>
</dbReference>
<dbReference type="GeneID" id="831130"/>
<dbReference type="Gramene" id="AT5G12900.1">
    <property type="protein sequence ID" value="AT5G12900.1"/>
    <property type="gene ID" value="AT5G12900"/>
</dbReference>
<dbReference type="KEGG" id="ath:AT5G12900"/>
<dbReference type="Araport" id="AT5G12900"/>
<dbReference type="TAIR" id="AT5G12900"/>
<dbReference type="eggNOG" id="ENOG502QS0M">
    <property type="taxonomic scope" value="Eukaryota"/>
</dbReference>
<dbReference type="HOGENOM" id="CLU_022742_1_0_1"/>
<dbReference type="InParanoid" id="Q9LXU9"/>
<dbReference type="OMA" id="CANHITL"/>
<dbReference type="OrthoDB" id="785851at2759"/>
<dbReference type="PhylomeDB" id="Q9LXU9"/>
<dbReference type="PRO" id="PR:Q9LXU9"/>
<dbReference type="Proteomes" id="UP000006548">
    <property type="component" value="Chromosome 5"/>
</dbReference>
<dbReference type="ExpressionAtlas" id="Q9LXU9">
    <property type="expression patterns" value="baseline and differential"/>
</dbReference>
<dbReference type="InterPro" id="IPR056813">
    <property type="entry name" value="GIL1_IRKI_C"/>
</dbReference>
<dbReference type="InterPro" id="IPR042316">
    <property type="entry name" value="IRKI-like"/>
</dbReference>
<dbReference type="PANTHER" id="PTHR31029">
    <property type="entry name" value="CYCLIN-DEPENDENT KINASE-LIKE PROTEIN"/>
    <property type="match status" value="1"/>
</dbReference>
<dbReference type="PANTHER" id="PTHR31029:SF3">
    <property type="entry name" value="IRK-INTERACTING PROTEIN"/>
    <property type="match status" value="1"/>
</dbReference>
<dbReference type="Pfam" id="PF24994">
    <property type="entry name" value="GIL1_IRKI_C"/>
    <property type="match status" value="1"/>
</dbReference>
<sequence>MASSETRMNKAREKEEAIANGVKLRALQASLMQMKSSPSSNYSLRNPSSSSAASPASRPLPNLSAHDYPVFTPSYEDEPVSAFHHKNLTLSETWDEDGVGLVDGDTYLSDSYKTSTSRKTVMMPHQDSHHHVYTMSDALRSPPLHFYTTGRSNCGSVDFRSVSSCNDYNKQKGFDTKSLKSSNLVVPLTDSHSAVVSSQPRNRGGRVMSWLFPKLKKKQKSNSIFNSPSITEKSEEVSEVLKDSGSGVEKLKRELMEANRSRDAALTQVSEMKSSLGELSEKLQYLESYCDNLKKALREATEVVSQENSGGRSSGKKNSEMPVSEEVMVEGFLQIVSEARLSIKQFLKTLVSEIDEEDSTLIGNINTLLQPHNLSFTSKYSKIIQYHLEAIISQSVYQDFENCVFQKNGKPKLLDPEQDRQANFSSFASLRNLSWNEVLKKGTKYYSDEFSRFCDEKMSLIITTLNWTRPWSEQMLQAFFVAAKCVWLLHLLAFSFNPALGILRVEENREFESSFMEDMGADRQRSALSRGPARVKVMVMPGFYVLDRVLRCKVLCRYKSLG</sequence>
<evidence type="ECO:0000255" key="1"/>
<evidence type="ECO:0000256" key="2">
    <source>
        <dbReference type="SAM" id="MobiDB-lite"/>
    </source>
</evidence>
<evidence type="ECO:0000269" key="3">
    <source>
    </source>
</evidence>
<evidence type="ECO:0000303" key="4">
    <source>
    </source>
</evidence>
<evidence type="ECO:0000312" key="5">
    <source>
        <dbReference type="Araport" id="AT5G12900"/>
    </source>
</evidence>
<evidence type="ECO:0000312" key="6">
    <source>
        <dbReference type="EMBL" id="CAB88254.1"/>
    </source>
</evidence>
<feature type="chain" id="PRO_0000433167" description="IRK-interacting protein">
    <location>
        <begin position="1"/>
        <end position="562"/>
    </location>
</feature>
<feature type="region of interest" description="Disordered" evidence="2">
    <location>
        <begin position="29"/>
        <end position="61"/>
    </location>
</feature>
<feature type="region of interest" description="Disordered" evidence="2">
    <location>
        <begin position="303"/>
        <end position="322"/>
    </location>
</feature>
<feature type="coiled-coil region" evidence="1">
    <location>
        <begin position="246"/>
        <end position="306"/>
    </location>
</feature>
<feature type="compositionally biased region" description="Low complexity" evidence="2">
    <location>
        <begin position="36"/>
        <end position="61"/>
    </location>
</feature>